<reference key="1">
    <citation type="journal article" date="1994" name="J. Mol. Evol.">
        <title>The complete nucleotide sequence and gene organization of carp (Cyprinus carpio) mitochondrial genome.</title>
        <authorList>
            <person name="Chang Y.S."/>
            <person name="Huang F.L."/>
            <person name="Lo T.B."/>
        </authorList>
    </citation>
    <scope>NUCLEOTIDE SEQUENCE [GENOMIC DNA]</scope>
</reference>
<evidence type="ECO:0000250" key="1"/>
<evidence type="ECO:0000255" key="2"/>
<evidence type="ECO:0000305" key="3"/>
<feature type="chain" id="PRO_0000117377" description="NADH-ubiquinone oxidoreductase chain 1">
    <location>
        <begin position="1"/>
        <end position="324"/>
    </location>
</feature>
<feature type="transmembrane region" description="Helical" evidence="2">
    <location>
        <begin position="9"/>
        <end position="29"/>
    </location>
</feature>
<feature type="transmembrane region" description="Helical" evidence="2">
    <location>
        <begin position="75"/>
        <end position="95"/>
    </location>
</feature>
<feature type="transmembrane region" description="Helical" evidence="2">
    <location>
        <begin position="106"/>
        <end position="126"/>
    </location>
</feature>
<feature type="transmembrane region" description="Helical" evidence="2">
    <location>
        <begin position="146"/>
        <end position="166"/>
    </location>
</feature>
<feature type="transmembrane region" description="Helical" evidence="2">
    <location>
        <begin position="177"/>
        <end position="197"/>
    </location>
</feature>
<feature type="transmembrane region" description="Helical" evidence="2">
    <location>
        <begin position="228"/>
        <end position="248"/>
    </location>
</feature>
<feature type="transmembrane region" description="Helical" evidence="2">
    <location>
        <begin position="259"/>
        <end position="279"/>
    </location>
</feature>
<feature type="transmembrane region" description="Helical" evidence="2">
    <location>
        <begin position="299"/>
        <end position="319"/>
    </location>
</feature>
<comment type="function">
    <text evidence="1">Core subunit of the mitochondrial membrane respiratory chain NADH dehydrogenase (Complex I) that is believed to belong to the minimal assembly required for catalysis. Complex I functions in the transfer of electrons from NADH to the respiratory chain. The immediate electron acceptor for the enzyme is believed to be ubiquinone (By similarity).</text>
</comment>
<comment type="catalytic activity">
    <reaction>
        <text>a ubiquinone + NADH + 5 H(+)(in) = a ubiquinol + NAD(+) + 4 H(+)(out)</text>
        <dbReference type="Rhea" id="RHEA:29091"/>
        <dbReference type="Rhea" id="RHEA-COMP:9565"/>
        <dbReference type="Rhea" id="RHEA-COMP:9566"/>
        <dbReference type="ChEBI" id="CHEBI:15378"/>
        <dbReference type="ChEBI" id="CHEBI:16389"/>
        <dbReference type="ChEBI" id="CHEBI:17976"/>
        <dbReference type="ChEBI" id="CHEBI:57540"/>
        <dbReference type="ChEBI" id="CHEBI:57945"/>
        <dbReference type="EC" id="7.1.1.2"/>
    </reaction>
</comment>
<comment type="subcellular location">
    <subcellularLocation>
        <location evidence="1">Mitochondrion inner membrane</location>
        <topology evidence="1">Multi-pass membrane protein</topology>
    </subcellularLocation>
</comment>
<comment type="similarity">
    <text evidence="3">Belongs to the complex I subunit 1 family.</text>
</comment>
<protein>
    <recommendedName>
        <fullName>NADH-ubiquinone oxidoreductase chain 1</fullName>
        <ecNumber>7.1.1.2</ecNumber>
    </recommendedName>
    <alternativeName>
        <fullName>NADH dehydrogenase subunit 1</fullName>
    </alternativeName>
</protein>
<gene>
    <name type="primary">MT-ND1</name>
    <name type="synonym">MTND1</name>
    <name type="synonym">NADH1</name>
    <name type="synonym">ND1</name>
</gene>
<geneLocation type="mitochondrion"/>
<sequence>MLNILMTHLINPLAYIVPVLLAVAFLTLIERKVLGYMQLRKGPNVVGPYGLLQPIADGVKLFIKEPVRPSTSSPFLFLAAPVLALTLAMTLWAPMPMPHPVTDLNLGILFILALSSLAVYSILGSGWALNSKYALIGALRAVAQTISYEVSLGLILLSVIIFSGGYTLQTFNITQESIWLLIPAWPLAAMWYISTLAETNRAPFDLTEGESELVSGFNVEYAGGPFALFFLAEYANILLMNTLSAVLFLGASHIPSVPELTTINLMTKAALLSIMFLWVRASYPRFRYDQLMHLVWKNFLPLTLAFVLWHTALPIALAGLPPQL</sequence>
<proteinExistence type="inferred from homology"/>
<accession>P24969</accession>
<organism>
    <name type="scientific">Cyprinus carpio</name>
    <name type="common">Common carp</name>
    <dbReference type="NCBI Taxonomy" id="7962"/>
    <lineage>
        <taxon>Eukaryota</taxon>
        <taxon>Metazoa</taxon>
        <taxon>Chordata</taxon>
        <taxon>Craniata</taxon>
        <taxon>Vertebrata</taxon>
        <taxon>Euteleostomi</taxon>
        <taxon>Actinopterygii</taxon>
        <taxon>Neopterygii</taxon>
        <taxon>Teleostei</taxon>
        <taxon>Ostariophysi</taxon>
        <taxon>Cypriniformes</taxon>
        <taxon>Cyprinidae</taxon>
        <taxon>Cyprininae</taxon>
        <taxon>Cyprinus</taxon>
    </lineage>
</organism>
<dbReference type="EC" id="7.1.1.2"/>
<dbReference type="EMBL" id="X61010">
    <property type="protein sequence ID" value="CAA43332.1"/>
    <property type="molecule type" value="Genomic_DNA"/>
</dbReference>
<dbReference type="PIR" id="S36002">
    <property type="entry name" value="S36002"/>
</dbReference>
<dbReference type="RefSeq" id="NP_007082.1">
    <property type="nucleotide sequence ID" value="NC_001606.1"/>
</dbReference>
<dbReference type="SMR" id="P24969"/>
<dbReference type="GeneID" id="807764"/>
<dbReference type="KEGG" id="ccar:807764"/>
<dbReference type="CTD" id="4535"/>
<dbReference type="OMA" id="WSGWASN"/>
<dbReference type="OrthoDB" id="531329at2759"/>
<dbReference type="Proteomes" id="UP000694384">
    <property type="component" value="Unplaced"/>
</dbReference>
<dbReference type="Proteomes" id="UP000694427">
    <property type="component" value="Unplaced"/>
</dbReference>
<dbReference type="Proteomes" id="UP000694700">
    <property type="component" value="Unplaced"/>
</dbReference>
<dbReference type="Proteomes" id="UP000694701">
    <property type="component" value="Unplaced"/>
</dbReference>
<dbReference type="Proteomes" id="UP001155660">
    <property type="component" value="Mitochondrion MT"/>
</dbReference>
<dbReference type="GO" id="GO:0005743">
    <property type="term" value="C:mitochondrial inner membrane"/>
    <property type="evidence" value="ECO:0007669"/>
    <property type="project" value="UniProtKB-SubCell"/>
</dbReference>
<dbReference type="GO" id="GO:0008137">
    <property type="term" value="F:NADH dehydrogenase (ubiquinone) activity"/>
    <property type="evidence" value="ECO:0007669"/>
    <property type="project" value="UniProtKB-EC"/>
</dbReference>
<dbReference type="GO" id="GO:0009060">
    <property type="term" value="P:aerobic respiration"/>
    <property type="evidence" value="ECO:0007669"/>
    <property type="project" value="TreeGrafter"/>
</dbReference>
<dbReference type="HAMAP" id="MF_01350">
    <property type="entry name" value="NDH1_NuoH"/>
    <property type="match status" value="1"/>
</dbReference>
<dbReference type="InterPro" id="IPR001694">
    <property type="entry name" value="NADH_UbQ_OxRdtase_su1/FPO"/>
</dbReference>
<dbReference type="InterPro" id="IPR018086">
    <property type="entry name" value="NADH_UbQ_OxRdtase_su1_CS"/>
</dbReference>
<dbReference type="PANTHER" id="PTHR11432">
    <property type="entry name" value="NADH DEHYDROGENASE SUBUNIT 1"/>
    <property type="match status" value="1"/>
</dbReference>
<dbReference type="PANTHER" id="PTHR11432:SF3">
    <property type="entry name" value="NADH-UBIQUINONE OXIDOREDUCTASE CHAIN 1"/>
    <property type="match status" value="1"/>
</dbReference>
<dbReference type="Pfam" id="PF00146">
    <property type="entry name" value="NADHdh"/>
    <property type="match status" value="1"/>
</dbReference>
<dbReference type="PROSITE" id="PS00667">
    <property type="entry name" value="COMPLEX1_ND1_1"/>
    <property type="match status" value="1"/>
</dbReference>
<dbReference type="PROSITE" id="PS00668">
    <property type="entry name" value="COMPLEX1_ND1_2"/>
    <property type="match status" value="1"/>
</dbReference>
<name>NU1M_CYPCA</name>
<keyword id="KW-0249">Electron transport</keyword>
<keyword id="KW-0472">Membrane</keyword>
<keyword id="KW-0496">Mitochondrion</keyword>
<keyword id="KW-0999">Mitochondrion inner membrane</keyword>
<keyword id="KW-0520">NAD</keyword>
<keyword id="KW-1185">Reference proteome</keyword>
<keyword id="KW-0679">Respiratory chain</keyword>
<keyword id="KW-1278">Translocase</keyword>
<keyword id="KW-0812">Transmembrane</keyword>
<keyword id="KW-1133">Transmembrane helix</keyword>
<keyword id="KW-0813">Transport</keyword>
<keyword id="KW-0830">Ubiquinone</keyword>